<organism>
    <name type="scientific">Symbiobacterium thermophilum (strain DSM 24528 / JCM 14929 / IAM 14863 / T)</name>
    <dbReference type="NCBI Taxonomy" id="292459"/>
    <lineage>
        <taxon>Bacteria</taxon>
        <taxon>Bacillati</taxon>
        <taxon>Bacillota</taxon>
        <taxon>Clostridia</taxon>
        <taxon>Eubacteriales</taxon>
        <taxon>Symbiobacteriaceae</taxon>
        <taxon>Symbiobacterium</taxon>
    </lineage>
</organism>
<protein>
    <recommendedName>
        <fullName evidence="1">Putative membrane protein insertion efficiency factor</fullName>
    </recommendedName>
</protein>
<gene>
    <name type="ordered locus">STH3339</name>
</gene>
<reference key="1">
    <citation type="journal article" date="2004" name="Nucleic Acids Res.">
        <title>Genome sequence of Symbiobacterium thermophilum, an uncultivable bacterium that depends on microbial commensalism.</title>
        <authorList>
            <person name="Ueda K."/>
            <person name="Yamashita A."/>
            <person name="Ishikawa J."/>
            <person name="Shimada M."/>
            <person name="Watsuji T."/>
            <person name="Morimura K."/>
            <person name="Ikeda H."/>
            <person name="Hattori M."/>
            <person name="Beppu T."/>
        </authorList>
    </citation>
    <scope>NUCLEOTIDE SEQUENCE [LARGE SCALE GENOMIC DNA]</scope>
    <source>
        <strain>DSM 24528 / JCM 14929 / IAM 14863 / T</strain>
    </source>
</reference>
<keyword id="KW-1003">Cell membrane</keyword>
<keyword id="KW-0472">Membrane</keyword>
<keyword id="KW-1185">Reference proteome</keyword>
<sequence>MTRLLMLLVRFYQRYLSPLKGGPTCRFTPSCSQYAYEALAKYGAIKGTWLAVRRVLRCHPFHPGGYDPVP</sequence>
<dbReference type="EMBL" id="AP006840">
    <property type="protein sequence ID" value="BAD42320.1"/>
    <property type="molecule type" value="Genomic_DNA"/>
</dbReference>
<dbReference type="RefSeq" id="WP_011197450.1">
    <property type="nucleotide sequence ID" value="NC_006177.1"/>
</dbReference>
<dbReference type="STRING" id="292459.STH3339"/>
<dbReference type="KEGG" id="sth:STH3339"/>
<dbReference type="eggNOG" id="COG0759">
    <property type="taxonomic scope" value="Bacteria"/>
</dbReference>
<dbReference type="HOGENOM" id="CLU_144811_6_0_9"/>
<dbReference type="OrthoDB" id="9801753at2"/>
<dbReference type="Proteomes" id="UP000000417">
    <property type="component" value="Chromosome"/>
</dbReference>
<dbReference type="GO" id="GO:0005886">
    <property type="term" value="C:plasma membrane"/>
    <property type="evidence" value="ECO:0007669"/>
    <property type="project" value="UniProtKB-SubCell"/>
</dbReference>
<dbReference type="HAMAP" id="MF_00386">
    <property type="entry name" value="UPF0161_YidD"/>
    <property type="match status" value="1"/>
</dbReference>
<dbReference type="InterPro" id="IPR002696">
    <property type="entry name" value="Membr_insert_effic_factor_YidD"/>
</dbReference>
<dbReference type="NCBIfam" id="TIGR00278">
    <property type="entry name" value="membrane protein insertion efficiency factor YidD"/>
    <property type="match status" value="1"/>
</dbReference>
<dbReference type="PANTHER" id="PTHR33383">
    <property type="entry name" value="MEMBRANE PROTEIN INSERTION EFFICIENCY FACTOR-RELATED"/>
    <property type="match status" value="1"/>
</dbReference>
<dbReference type="PANTHER" id="PTHR33383:SF1">
    <property type="entry name" value="MEMBRANE PROTEIN INSERTION EFFICIENCY FACTOR-RELATED"/>
    <property type="match status" value="1"/>
</dbReference>
<dbReference type="Pfam" id="PF01809">
    <property type="entry name" value="YidD"/>
    <property type="match status" value="1"/>
</dbReference>
<dbReference type="SMART" id="SM01234">
    <property type="entry name" value="Haemolytic"/>
    <property type="match status" value="1"/>
</dbReference>
<accession>Q67J30</accession>
<name>YIDD_SYMTH</name>
<feature type="chain" id="PRO_0000253184" description="Putative membrane protein insertion efficiency factor">
    <location>
        <begin position="1"/>
        <end position="70"/>
    </location>
</feature>
<evidence type="ECO:0000255" key="1">
    <source>
        <dbReference type="HAMAP-Rule" id="MF_00386"/>
    </source>
</evidence>
<proteinExistence type="inferred from homology"/>
<comment type="function">
    <text evidence="1">Could be involved in insertion of integral membrane proteins into the membrane.</text>
</comment>
<comment type="subcellular location">
    <subcellularLocation>
        <location evidence="1">Cell membrane</location>
        <topology evidence="1">Peripheral membrane protein</topology>
        <orientation evidence="1">Cytoplasmic side</orientation>
    </subcellularLocation>
</comment>
<comment type="similarity">
    <text evidence="1">Belongs to the UPF0161 family.</text>
</comment>